<evidence type="ECO:0000255" key="1">
    <source>
        <dbReference type="HAMAP-Rule" id="MF_00095"/>
    </source>
</evidence>
<accession>P58432</accession>
<keyword id="KW-1185">Reference proteome</keyword>
<feature type="chain" id="PRO_0000152329" description="Sugar fermentation stimulation protein homolog">
    <location>
        <begin position="1"/>
        <end position="225"/>
    </location>
</feature>
<sequence>MIVYSFPTLYEEIVKARINRFTVVTESEKICHLHDPGRLKELIYPGNKILIRNVNGKRKTNCQVTAAWSGKEWVVTDSSIHNEIARRFLPSDAKSEVTVGKSRIDFAFDNTYVEVKGCTLARDGIALFPDAPTKRGKRHLDELIELRRNGYSVLLMILVFRTDVVCFSPNFDTDRDFSNTFIKALKEGVNVEVKVFQLDKENIVYKGEIPVCHQILEKSTNFSLP</sequence>
<comment type="similarity">
    <text evidence="1">Belongs to the SfsA family.</text>
</comment>
<proteinExistence type="inferred from homology"/>
<dbReference type="EMBL" id="BA000023">
    <property type="protein sequence ID" value="BAB66083.1"/>
    <property type="molecule type" value="Genomic_DNA"/>
</dbReference>
<dbReference type="RefSeq" id="WP_010979065.1">
    <property type="nucleotide sequence ID" value="NC_003106.2"/>
</dbReference>
<dbReference type="SMR" id="P58432"/>
<dbReference type="STRING" id="273063.STK_10540"/>
<dbReference type="GeneID" id="1459037"/>
<dbReference type="KEGG" id="sto:STK_10540"/>
<dbReference type="PATRIC" id="fig|273063.9.peg.1187"/>
<dbReference type="eggNOG" id="arCOG04115">
    <property type="taxonomic scope" value="Archaea"/>
</dbReference>
<dbReference type="OrthoDB" id="34139at2157"/>
<dbReference type="Proteomes" id="UP000001015">
    <property type="component" value="Chromosome"/>
</dbReference>
<dbReference type="GO" id="GO:0003677">
    <property type="term" value="F:DNA binding"/>
    <property type="evidence" value="ECO:0007669"/>
    <property type="project" value="InterPro"/>
</dbReference>
<dbReference type="CDD" id="cd22357">
    <property type="entry name" value="SfsA-like"/>
    <property type="match status" value="1"/>
</dbReference>
<dbReference type="Gene3D" id="2.40.50.580">
    <property type="match status" value="1"/>
</dbReference>
<dbReference type="Gene3D" id="3.40.1350.60">
    <property type="match status" value="1"/>
</dbReference>
<dbReference type="HAMAP" id="MF_00095">
    <property type="entry name" value="SfsA"/>
    <property type="match status" value="1"/>
</dbReference>
<dbReference type="InterPro" id="IPR005224">
    <property type="entry name" value="SfsA"/>
</dbReference>
<dbReference type="InterPro" id="IPR040452">
    <property type="entry name" value="SfsA_C"/>
</dbReference>
<dbReference type="InterPro" id="IPR041465">
    <property type="entry name" value="SfsA_N"/>
</dbReference>
<dbReference type="NCBIfam" id="TIGR00230">
    <property type="entry name" value="sfsA"/>
    <property type="match status" value="1"/>
</dbReference>
<dbReference type="PANTHER" id="PTHR30545">
    <property type="entry name" value="SUGAR FERMENTATION STIMULATION PROTEIN A"/>
    <property type="match status" value="1"/>
</dbReference>
<dbReference type="PANTHER" id="PTHR30545:SF2">
    <property type="entry name" value="SUGAR FERMENTATION STIMULATION PROTEIN A"/>
    <property type="match status" value="1"/>
</dbReference>
<dbReference type="Pfam" id="PF03749">
    <property type="entry name" value="SfsA"/>
    <property type="match status" value="1"/>
</dbReference>
<dbReference type="Pfam" id="PF17746">
    <property type="entry name" value="SfsA_N"/>
    <property type="match status" value="1"/>
</dbReference>
<gene>
    <name evidence="1" type="primary">sfsA</name>
    <name type="ordered locus">STK_10540</name>
</gene>
<name>SFSA_SULTO</name>
<reference key="1">
    <citation type="journal article" date="2001" name="DNA Res.">
        <title>Complete genome sequence of an aerobic thermoacidophilic Crenarchaeon, Sulfolobus tokodaii strain7.</title>
        <authorList>
            <person name="Kawarabayasi Y."/>
            <person name="Hino Y."/>
            <person name="Horikawa H."/>
            <person name="Jin-no K."/>
            <person name="Takahashi M."/>
            <person name="Sekine M."/>
            <person name="Baba S."/>
            <person name="Ankai A."/>
            <person name="Kosugi H."/>
            <person name="Hosoyama A."/>
            <person name="Fukui S."/>
            <person name="Nagai Y."/>
            <person name="Nishijima K."/>
            <person name="Otsuka R."/>
            <person name="Nakazawa H."/>
            <person name="Takamiya M."/>
            <person name="Kato Y."/>
            <person name="Yoshizawa T."/>
            <person name="Tanaka T."/>
            <person name="Kudoh Y."/>
            <person name="Yamazaki J."/>
            <person name="Kushida N."/>
            <person name="Oguchi A."/>
            <person name="Aoki K."/>
            <person name="Masuda S."/>
            <person name="Yanagii M."/>
            <person name="Nishimura M."/>
            <person name="Yamagishi A."/>
            <person name="Oshima T."/>
            <person name="Kikuchi H."/>
        </authorList>
    </citation>
    <scope>NUCLEOTIDE SEQUENCE [LARGE SCALE GENOMIC DNA]</scope>
    <source>
        <strain>DSM 16993 / JCM 10545 / NBRC 100140 / 7</strain>
    </source>
</reference>
<organism>
    <name type="scientific">Sulfurisphaera tokodaii (strain DSM 16993 / JCM 10545 / NBRC 100140 / 7)</name>
    <name type="common">Sulfolobus tokodaii</name>
    <dbReference type="NCBI Taxonomy" id="273063"/>
    <lineage>
        <taxon>Archaea</taxon>
        <taxon>Thermoproteota</taxon>
        <taxon>Thermoprotei</taxon>
        <taxon>Sulfolobales</taxon>
        <taxon>Sulfolobaceae</taxon>
        <taxon>Sulfurisphaera</taxon>
    </lineage>
</organism>
<protein>
    <recommendedName>
        <fullName evidence="1">Sugar fermentation stimulation protein homolog</fullName>
    </recommendedName>
</protein>